<keyword id="KW-0446">Lipid-binding</keyword>
<keyword id="KW-0813">Transport</keyword>
<organism>
    <name type="scientific">Brassica napus</name>
    <name type="common">Rape</name>
    <dbReference type="NCBI Taxonomy" id="3708"/>
    <lineage>
        <taxon>Eukaryota</taxon>
        <taxon>Viridiplantae</taxon>
        <taxon>Streptophyta</taxon>
        <taxon>Embryophyta</taxon>
        <taxon>Tracheophyta</taxon>
        <taxon>Spermatophyta</taxon>
        <taxon>Magnoliopsida</taxon>
        <taxon>eudicotyledons</taxon>
        <taxon>Gunneridae</taxon>
        <taxon>Pentapetalae</taxon>
        <taxon>rosids</taxon>
        <taxon>malvids</taxon>
        <taxon>Brassicales</taxon>
        <taxon>Brassicaceae</taxon>
        <taxon>Brassiceae</taxon>
        <taxon>Brassica</taxon>
    </lineage>
</organism>
<evidence type="ECO:0000250" key="1"/>
<evidence type="ECO:0000255" key="2">
    <source>
        <dbReference type="PROSITE-ProRule" id="PRU00573"/>
    </source>
</evidence>
<evidence type="ECO:0000305" key="3"/>
<feature type="chain" id="PRO_0000214017" description="Acyl-CoA-binding protein">
    <location>
        <begin position="1"/>
        <end position="92"/>
    </location>
</feature>
<feature type="domain" description="ACB" evidence="2">
    <location>
        <begin position="3"/>
        <end position="88"/>
    </location>
</feature>
<feature type="binding site" evidence="1">
    <location>
        <begin position="30"/>
        <end position="34"/>
    </location>
    <ligand>
        <name>an acyl-CoA</name>
        <dbReference type="ChEBI" id="CHEBI:58342"/>
    </ligand>
</feature>
<feature type="binding site" evidence="1">
    <location>
        <position position="56"/>
    </location>
    <ligand>
        <name>an acyl-CoA</name>
        <dbReference type="ChEBI" id="CHEBI:58342"/>
    </ligand>
</feature>
<feature type="binding site" evidence="1">
    <location>
        <position position="75"/>
    </location>
    <ligand>
        <name>an acyl-CoA</name>
        <dbReference type="ChEBI" id="CHEBI:58342"/>
    </ligand>
</feature>
<reference key="1">
    <citation type="journal article" date="1994" name="Plant Mol. Biol.">
        <title>Molecular cloning of a cDNA from Brassica napus L. for a homologue of acyl-CoA-binding protein.</title>
        <authorList>
            <person name="Hills M.J."/>
            <person name="Dann R."/>
            <person name="Lydiate D."/>
            <person name="Sharpe A."/>
        </authorList>
    </citation>
    <scope>NUCLEOTIDE SEQUENCE [MRNA]</scope>
    <source>
        <strain>cv. Jet neuf</strain>
    </source>
</reference>
<name>ACBP_BRANA</name>
<protein>
    <recommendedName>
        <fullName>Acyl-CoA-binding protein</fullName>
        <shortName>ACBP</shortName>
    </recommendedName>
</protein>
<accession>Q39315</accession>
<proteinExistence type="inferred from homology"/>
<sequence>MGLKEDFEEHAEKVKKLTASPSNEDLLILYGLYKQATVGPVTTSRPGMFSMKERAKWDAWKAVEGKSTDEAMSDYITKVKQLLEAEASSASA</sequence>
<dbReference type="EMBL" id="X77134">
    <property type="protein sequence ID" value="CAA54390.1"/>
    <property type="molecule type" value="mRNA"/>
</dbReference>
<dbReference type="PIR" id="S48040">
    <property type="entry name" value="S48040"/>
</dbReference>
<dbReference type="RefSeq" id="XP_013749226.1">
    <property type="nucleotide sequence ID" value="XM_013893772.3"/>
</dbReference>
<dbReference type="RefSeq" id="XP_048635184.1">
    <property type="nucleotide sequence ID" value="XM_048779227.1"/>
</dbReference>
<dbReference type="SMR" id="Q39315"/>
<dbReference type="EnsemblPlants" id="CDY50955">
    <property type="protein sequence ID" value="CDY50955"/>
    <property type="gene ID" value="GSBRNA2T00097830001"/>
</dbReference>
<dbReference type="GeneID" id="106451796"/>
<dbReference type="GeneID" id="125608755"/>
<dbReference type="Gramene" id="CDY50955">
    <property type="protein sequence ID" value="CDY50955"/>
    <property type="gene ID" value="GSBRNA2T00097830001"/>
</dbReference>
<dbReference type="KEGG" id="bna:106451796"/>
<dbReference type="OMA" id="WEGKKGM"/>
<dbReference type="OrthoDB" id="346910at2759"/>
<dbReference type="GO" id="GO:0000062">
    <property type="term" value="F:fatty-acyl-CoA binding"/>
    <property type="evidence" value="ECO:0007669"/>
    <property type="project" value="InterPro"/>
</dbReference>
<dbReference type="CDD" id="cd00435">
    <property type="entry name" value="ACBP"/>
    <property type="match status" value="1"/>
</dbReference>
<dbReference type="FunFam" id="1.20.80.10:FF:000010">
    <property type="entry name" value="Acyl-CoA-binding domain-containing protein 5"/>
    <property type="match status" value="1"/>
</dbReference>
<dbReference type="Gene3D" id="1.20.80.10">
    <property type="match status" value="1"/>
</dbReference>
<dbReference type="InterPro" id="IPR022408">
    <property type="entry name" value="Acyl-CoA-binding_prot_CS"/>
</dbReference>
<dbReference type="InterPro" id="IPR000582">
    <property type="entry name" value="Acyl-CoA-binding_protein"/>
</dbReference>
<dbReference type="InterPro" id="IPR035984">
    <property type="entry name" value="Acyl-CoA-binding_sf"/>
</dbReference>
<dbReference type="InterPro" id="IPR014352">
    <property type="entry name" value="FERM/acyl-CoA-bd_prot_sf"/>
</dbReference>
<dbReference type="PANTHER" id="PTHR23310:SF62">
    <property type="entry name" value="ACYL-COA BINDING PROTEIN 1, ISOFORM A"/>
    <property type="match status" value="1"/>
</dbReference>
<dbReference type="PANTHER" id="PTHR23310">
    <property type="entry name" value="ACYL-COA-BINDING PROTEIN, ACBP"/>
    <property type="match status" value="1"/>
</dbReference>
<dbReference type="Pfam" id="PF00887">
    <property type="entry name" value="ACBP"/>
    <property type="match status" value="1"/>
</dbReference>
<dbReference type="PRINTS" id="PR00689">
    <property type="entry name" value="ACOABINDINGP"/>
</dbReference>
<dbReference type="SUPFAM" id="SSF47027">
    <property type="entry name" value="Acyl-CoA binding protein"/>
    <property type="match status" value="1"/>
</dbReference>
<dbReference type="PROSITE" id="PS00880">
    <property type="entry name" value="ACB_1"/>
    <property type="match status" value="1"/>
</dbReference>
<dbReference type="PROSITE" id="PS51228">
    <property type="entry name" value="ACB_2"/>
    <property type="match status" value="1"/>
</dbReference>
<comment type="function">
    <text evidence="1">Binds medium- and long-chain acyl-CoA esters with very high affinity and may function as an intracellular carrier of acyl-CoA esters.</text>
</comment>
<comment type="similarity">
    <text evidence="3">Belongs to the ACBP family.</text>
</comment>